<dbReference type="EMBL" id="CP001050">
    <property type="protein sequence ID" value="ACF29548.1"/>
    <property type="molecule type" value="Genomic_DNA"/>
</dbReference>
<dbReference type="SMR" id="B4RL58"/>
<dbReference type="KEGG" id="ngk:NGK_0868"/>
<dbReference type="HOGENOM" id="CLU_135723_3_3_4"/>
<dbReference type="Proteomes" id="UP000002564">
    <property type="component" value="Chromosome"/>
</dbReference>
<dbReference type="GO" id="GO:1990904">
    <property type="term" value="C:ribonucleoprotein complex"/>
    <property type="evidence" value="ECO:0007669"/>
    <property type="project" value="UniProtKB-KW"/>
</dbReference>
<dbReference type="GO" id="GO:0005840">
    <property type="term" value="C:ribosome"/>
    <property type="evidence" value="ECO:0007669"/>
    <property type="project" value="UniProtKB-KW"/>
</dbReference>
<dbReference type="GO" id="GO:0003735">
    <property type="term" value="F:structural constituent of ribosome"/>
    <property type="evidence" value="ECO:0007669"/>
    <property type="project" value="InterPro"/>
</dbReference>
<dbReference type="GO" id="GO:0006412">
    <property type="term" value="P:translation"/>
    <property type="evidence" value="ECO:0007669"/>
    <property type="project" value="UniProtKB-UniRule"/>
</dbReference>
<dbReference type="HAMAP" id="MF_00251">
    <property type="entry name" value="Ribosomal_bL36"/>
    <property type="match status" value="1"/>
</dbReference>
<dbReference type="InterPro" id="IPR000473">
    <property type="entry name" value="Ribosomal_bL36"/>
</dbReference>
<dbReference type="InterPro" id="IPR035977">
    <property type="entry name" value="Ribosomal_bL36_sp"/>
</dbReference>
<dbReference type="InterPro" id="IPR047621">
    <property type="entry name" value="Ribosomal_L36_bact"/>
</dbReference>
<dbReference type="NCBIfam" id="NF002021">
    <property type="entry name" value="PRK00831.1"/>
    <property type="match status" value="1"/>
</dbReference>
<dbReference type="NCBIfam" id="TIGR01022">
    <property type="entry name" value="rpmJ_bact"/>
    <property type="match status" value="1"/>
</dbReference>
<dbReference type="PANTHER" id="PTHR47781">
    <property type="entry name" value="50S RIBOSOMAL PROTEIN L36 2"/>
    <property type="match status" value="1"/>
</dbReference>
<dbReference type="PANTHER" id="PTHR47781:SF1">
    <property type="entry name" value="LARGE RIBOSOMAL SUBUNIT PROTEIN BL36B"/>
    <property type="match status" value="1"/>
</dbReference>
<dbReference type="Pfam" id="PF00444">
    <property type="entry name" value="Ribosomal_L36"/>
    <property type="match status" value="1"/>
</dbReference>
<dbReference type="SUPFAM" id="SSF57840">
    <property type="entry name" value="Ribosomal protein L36"/>
    <property type="match status" value="1"/>
</dbReference>
<feature type="chain" id="PRO_1000101049" description="Large ribosomal subunit protein bL36">
    <location>
        <begin position="1"/>
        <end position="41"/>
    </location>
</feature>
<name>RL36_NEIG2</name>
<comment type="similarity">
    <text evidence="1">Belongs to the bacterial ribosomal protein bL36 family.</text>
</comment>
<gene>
    <name evidence="1" type="primary">rpmJ</name>
    <name type="ordered locus">NGK_0868</name>
</gene>
<accession>B4RL58</accession>
<sequence>MQVLSSLKTAKQRHRDCQIVRRRGKVYVICKSNPRFKSRQR</sequence>
<protein>
    <recommendedName>
        <fullName evidence="1">Large ribosomal subunit protein bL36</fullName>
    </recommendedName>
    <alternativeName>
        <fullName evidence="2">50S ribosomal protein L36</fullName>
    </alternativeName>
</protein>
<organism>
    <name type="scientific">Neisseria gonorrhoeae (strain NCCP11945)</name>
    <dbReference type="NCBI Taxonomy" id="521006"/>
    <lineage>
        <taxon>Bacteria</taxon>
        <taxon>Pseudomonadati</taxon>
        <taxon>Pseudomonadota</taxon>
        <taxon>Betaproteobacteria</taxon>
        <taxon>Neisseriales</taxon>
        <taxon>Neisseriaceae</taxon>
        <taxon>Neisseria</taxon>
    </lineage>
</organism>
<keyword id="KW-0687">Ribonucleoprotein</keyword>
<keyword id="KW-0689">Ribosomal protein</keyword>
<evidence type="ECO:0000255" key="1">
    <source>
        <dbReference type="HAMAP-Rule" id="MF_00251"/>
    </source>
</evidence>
<evidence type="ECO:0000305" key="2"/>
<proteinExistence type="inferred from homology"/>
<reference key="1">
    <citation type="journal article" date="2008" name="J. Bacteriol.">
        <title>Complete genome sequence of Neisseria gonorrhoeae NCCP11945.</title>
        <authorList>
            <person name="Chung G.T."/>
            <person name="Yoo J.S."/>
            <person name="Oh H.B."/>
            <person name="Lee Y.S."/>
            <person name="Cha S.H."/>
            <person name="Kim S.J."/>
            <person name="Yoo C.K."/>
        </authorList>
    </citation>
    <scope>NUCLEOTIDE SEQUENCE [LARGE SCALE GENOMIC DNA]</scope>
    <source>
        <strain>NCCP11945</strain>
    </source>
</reference>